<evidence type="ECO:0000250" key="1"/>
<evidence type="ECO:0000250" key="2">
    <source>
        <dbReference type="UniProtKB" id="P00157"/>
    </source>
</evidence>
<evidence type="ECO:0000255" key="3">
    <source>
        <dbReference type="PROSITE-ProRule" id="PRU00967"/>
    </source>
</evidence>
<evidence type="ECO:0000255" key="4">
    <source>
        <dbReference type="PROSITE-ProRule" id="PRU00968"/>
    </source>
</evidence>
<proteinExistence type="inferred from homology"/>
<sequence>MTNIRKTHPLMKIVNNAFIDLPAPSNISSWWNFGSLLGVCLILQILTGLFLAMHYTSDTTTAFSSVTHICRDVNYGWIIRYMHANGASMFFICLFMHVGRGLYYGSYTFLETWNIGVILLFATMATAFMGYVLPWGQMSFWGATVITNLLSAIPYIGTNLVEWIWGGFSVDKATLTRFFAFHFILPFIIAALAMVHLLFLHETGSNNPTGITSDTDKIPFHPYYTIKDILGALLLILALMLLVLFAPDLLGDPDNYTPANPLNTPPHIKPEWYFLFAYAILRSIPNKLGGVLALVLSILILVLVPTLHTSKQRSMMFRPISQCVFWILVADLLTLTWIGGQPVEHPYIIIGQLASIMYFLLILVLMPVASTIENNLLKW</sequence>
<geneLocation type="mitochondrion"/>
<protein>
    <recommendedName>
        <fullName>Cytochrome b</fullName>
    </recommendedName>
    <alternativeName>
        <fullName>Complex III subunit 3</fullName>
    </alternativeName>
    <alternativeName>
        <fullName>Complex III subunit III</fullName>
    </alternativeName>
    <alternativeName>
        <fullName>Cytochrome b-c1 complex subunit 3</fullName>
    </alternativeName>
    <alternativeName>
        <fullName>Ubiquinol-cytochrome-c reductase complex cytochrome b subunit</fullName>
    </alternativeName>
</protein>
<feature type="chain" id="PRO_0000061326" description="Cytochrome b">
    <location>
        <begin position="1"/>
        <end position="379"/>
    </location>
</feature>
<feature type="transmembrane region" description="Helical" evidence="2">
    <location>
        <begin position="33"/>
        <end position="53"/>
    </location>
</feature>
<feature type="transmembrane region" description="Helical" evidence="2">
    <location>
        <begin position="77"/>
        <end position="98"/>
    </location>
</feature>
<feature type="transmembrane region" description="Helical" evidence="2">
    <location>
        <begin position="113"/>
        <end position="133"/>
    </location>
</feature>
<feature type="transmembrane region" description="Helical" evidence="2">
    <location>
        <begin position="178"/>
        <end position="198"/>
    </location>
</feature>
<feature type="transmembrane region" description="Helical" evidence="2">
    <location>
        <begin position="226"/>
        <end position="246"/>
    </location>
</feature>
<feature type="transmembrane region" description="Helical" evidence="2">
    <location>
        <begin position="288"/>
        <end position="308"/>
    </location>
</feature>
<feature type="transmembrane region" description="Helical" evidence="2">
    <location>
        <begin position="320"/>
        <end position="340"/>
    </location>
</feature>
<feature type="transmembrane region" description="Helical" evidence="2">
    <location>
        <begin position="347"/>
        <end position="367"/>
    </location>
</feature>
<feature type="binding site" description="axial binding residue" evidence="2">
    <location>
        <position position="83"/>
    </location>
    <ligand>
        <name>heme b</name>
        <dbReference type="ChEBI" id="CHEBI:60344"/>
        <label>b562</label>
    </ligand>
    <ligandPart>
        <name>Fe</name>
        <dbReference type="ChEBI" id="CHEBI:18248"/>
    </ligandPart>
</feature>
<feature type="binding site" description="axial binding residue" evidence="2">
    <location>
        <position position="97"/>
    </location>
    <ligand>
        <name>heme b</name>
        <dbReference type="ChEBI" id="CHEBI:60344"/>
        <label>b566</label>
    </ligand>
    <ligandPart>
        <name>Fe</name>
        <dbReference type="ChEBI" id="CHEBI:18248"/>
    </ligandPart>
</feature>
<feature type="binding site" description="axial binding residue" evidence="2">
    <location>
        <position position="182"/>
    </location>
    <ligand>
        <name>heme b</name>
        <dbReference type="ChEBI" id="CHEBI:60344"/>
        <label>b562</label>
    </ligand>
    <ligandPart>
        <name>Fe</name>
        <dbReference type="ChEBI" id="CHEBI:18248"/>
    </ligandPart>
</feature>
<feature type="binding site" description="axial binding residue" evidence="2">
    <location>
        <position position="196"/>
    </location>
    <ligand>
        <name>heme b</name>
        <dbReference type="ChEBI" id="CHEBI:60344"/>
        <label>b566</label>
    </ligand>
    <ligandPart>
        <name>Fe</name>
        <dbReference type="ChEBI" id="CHEBI:18248"/>
    </ligandPart>
</feature>
<feature type="binding site" evidence="2">
    <location>
        <position position="201"/>
    </location>
    <ligand>
        <name>a ubiquinone</name>
        <dbReference type="ChEBI" id="CHEBI:16389"/>
    </ligand>
</feature>
<gene>
    <name type="primary">MT-CYB</name>
    <name type="synonym">COB</name>
    <name type="synonym">CYTB</name>
    <name type="synonym">MTCYB</name>
</gene>
<reference key="1">
    <citation type="journal article" date="2001" name="Mol. Biol. Evol.">
        <title>Molecular insights into the evolution of the family Bovidae: a nuclear DNA perspective.</title>
        <authorList>
            <person name="Matthee C.A."/>
            <person name="Davis S.K."/>
        </authorList>
    </citation>
    <scope>NUCLEOTIDE SEQUENCE [GENOMIC DNA]</scope>
</reference>
<comment type="function">
    <text evidence="2">Component of the ubiquinol-cytochrome c reductase complex (complex III or cytochrome b-c1 complex) that is part of the mitochondrial respiratory chain. The b-c1 complex mediates electron transfer from ubiquinol to cytochrome c. Contributes to the generation of a proton gradient across the mitochondrial membrane that is then used for ATP synthesis.</text>
</comment>
<comment type="cofactor">
    <cofactor evidence="2">
        <name>heme b</name>
        <dbReference type="ChEBI" id="CHEBI:60344"/>
    </cofactor>
    <text evidence="2">Binds 2 heme b groups non-covalently.</text>
</comment>
<comment type="subunit">
    <text evidence="2">The cytochrome bc1 complex contains 11 subunits: 3 respiratory subunits (MT-CYB, CYC1 and UQCRFS1), 2 core proteins (UQCRC1 and UQCRC2) and 6 low-molecular weight proteins (UQCRH/QCR6, UQCRB/QCR7, UQCRQ/QCR8, UQCR10/QCR9, UQCR11/QCR10 and a cleavage product of UQCRFS1). This cytochrome bc1 complex then forms a dimer.</text>
</comment>
<comment type="subcellular location">
    <subcellularLocation>
        <location evidence="2">Mitochondrion inner membrane</location>
        <topology evidence="2">Multi-pass membrane protein</topology>
    </subcellularLocation>
</comment>
<comment type="miscellaneous">
    <text evidence="1">Heme 1 (or BL or b562) is low-potential and absorbs at about 562 nm, and heme 2 (or BH or b566) is high-potential and absorbs at about 566 nm.</text>
</comment>
<comment type="similarity">
    <text evidence="3 4">Belongs to the cytochrome b family.</text>
</comment>
<comment type="caution">
    <text evidence="2">The full-length protein contains only eight transmembrane helices, not nine as predicted by bioinformatics tools.</text>
</comment>
<keyword id="KW-0249">Electron transport</keyword>
<keyword id="KW-0349">Heme</keyword>
<keyword id="KW-0408">Iron</keyword>
<keyword id="KW-0472">Membrane</keyword>
<keyword id="KW-0479">Metal-binding</keyword>
<keyword id="KW-0496">Mitochondrion</keyword>
<keyword id="KW-0999">Mitochondrion inner membrane</keyword>
<keyword id="KW-0679">Respiratory chain</keyword>
<keyword id="KW-0812">Transmembrane</keyword>
<keyword id="KW-1133">Transmembrane helix</keyword>
<keyword id="KW-0813">Transport</keyword>
<keyword id="KW-0830">Ubiquinone</keyword>
<name>CYB_ORYGA</name>
<organism>
    <name type="scientific">Oryx gazella</name>
    <name type="common">Gemsbok</name>
    <dbReference type="NCBI Taxonomy" id="9958"/>
    <lineage>
        <taxon>Eukaryota</taxon>
        <taxon>Metazoa</taxon>
        <taxon>Chordata</taxon>
        <taxon>Craniata</taxon>
        <taxon>Vertebrata</taxon>
        <taxon>Euteleostomi</taxon>
        <taxon>Mammalia</taxon>
        <taxon>Eutheria</taxon>
        <taxon>Laurasiatheria</taxon>
        <taxon>Artiodactyla</taxon>
        <taxon>Ruminantia</taxon>
        <taxon>Pecora</taxon>
        <taxon>Bovidae</taxon>
        <taxon>Hippotraginae</taxon>
        <taxon>Oryx</taxon>
    </lineage>
</organism>
<dbReference type="EMBL" id="AF249973">
    <property type="protein sequence ID" value="AAK67831.1"/>
    <property type="molecule type" value="Genomic_DNA"/>
</dbReference>
<dbReference type="SMR" id="Q955G6"/>
<dbReference type="GO" id="GO:0005743">
    <property type="term" value="C:mitochondrial inner membrane"/>
    <property type="evidence" value="ECO:0007669"/>
    <property type="project" value="UniProtKB-SubCell"/>
</dbReference>
<dbReference type="GO" id="GO:0045275">
    <property type="term" value="C:respiratory chain complex III"/>
    <property type="evidence" value="ECO:0007669"/>
    <property type="project" value="InterPro"/>
</dbReference>
<dbReference type="GO" id="GO:0046872">
    <property type="term" value="F:metal ion binding"/>
    <property type="evidence" value="ECO:0007669"/>
    <property type="project" value="UniProtKB-KW"/>
</dbReference>
<dbReference type="GO" id="GO:0008121">
    <property type="term" value="F:ubiquinol-cytochrome-c reductase activity"/>
    <property type="evidence" value="ECO:0007669"/>
    <property type="project" value="InterPro"/>
</dbReference>
<dbReference type="GO" id="GO:0006122">
    <property type="term" value="P:mitochondrial electron transport, ubiquinol to cytochrome c"/>
    <property type="evidence" value="ECO:0007669"/>
    <property type="project" value="TreeGrafter"/>
</dbReference>
<dbReference type="CDD" id="cd00290">
    <property type="entry name" value="cytochrome_b_C"/>
    <property type="match status" value="1"/>
</dbReference>
<dbReference type="CDD" id="cd00284">
    <property type="entry name" value="Cytochrome_b_N"/>
    <property type="match status" value="1"/>
</dbReference>
<dbReference type="FunFam" id="1.20.810.10:FF:000002">
    <property type="entry name" value="Cytochrome b"/>
    <property type="match status" value="1"/>
</dbReference>
<dbReference type="Gene3D" id="1.20.810.10">
    <property type="entry name" value="Cytochrome Bc1 Complex, Chain C"/>
    <property type="match status" value="1"/>
</dbReference>
<dbReference type="InterPro" id="IPR005798">
    <property type="entry name" value="Cyt_b/b6_C"/>
</dbReference>
<dbReference type="InterPro" id="IPR036150">
    <property type="entry name" value="Cyt_b/b6_C_sf"/>
</dbReference>
<dbReference type="InterPro" id="IPR005797">
    <property type="entry name" value="Cyt_b/b6_N"/>
</dbReference>
<dbReference type="InterPro" id="IPR027387">
    <property type="entry name" value="Cytb/b6-like_sf"/>
</dbReference>
<dbReference type="InterPro" id="IPR030689">
    <property type="entry name" value="Cytochrome_b"/>
</dbReference>
<dbReference type="InterPro" id="IPR048260">
    <property type="entry name" value="Cytochrome_b_C_euk/bac"/>
</dbReference>
<dbReference type="InterPro" id="IPR048259">
    <property type="entry name" value="Cytochrome_b_N_euk/bac"/>
</dbReference>
<dbReference type="InterPro" id="IPR016174">
    <property type="entry name" value="Di-haem_cyt_TM"/>
</dbReference>
<dbReference type="PANTHER" id="PTHR19271">
    <property type="entry name" value="CYTOCHROME B"/>
    <property type="match status" value="1"/>
</dbReference>
<dbReference type="PANTHER" id="PTHR19271:SF16">
    <property type="entry name" value="CYTOCHROME B"/>
    <property type="match status" value="1"/>
</dbReference>
<dbReference type="Pfam" id="PF00032">
    <property type="entry name" value="Cytochrom_B_C"/>
    <property type="match status" value="1"/>
</dbReference>
<dbReference type="Pfam" id="PF00033">
    <property type="entry name" value="Cytochrome_B"/>
    <property type="match status" value="1"/>
</dbReference>
<dbReference type="PIRSF" id="PIRSF038885">
    <property type="entry name" value="COB"/>
    <property type="match status" value="1"/>
</dbReference>
<dbReference type="SUPFAM" id="SSF81648">
    <property type="entry name" value="a domain/subunit of cytochrome bc1 complex (Ubiquinol-cytochrome c reductase)"/>
    <property type="match status" value="1"/>
</dbReference>
<dbReference type="SUPFAM" id="SSF81342">
    <property type="entry name" value="Transmembrane di-heme cytochromes"/>
    <property type="match status" value="1"/>
</dbReference>
<dbReference type="PROSITE" id="PS51003">
    <property type="entry name" value="CYTB_CTER"/>
    <property type="match status" value="1"/>
</dbReference>
<dbReference type="PROSITE" id="PS51002">
    <property type="entry name" value="CYTB_NTER"/>
    <property type="match status" value="1"/>
</dbReference>
<accession>Q955G6</accession>